<evidence type="ECO:0000255" key="1"/>
<evidence type="ECO:0000269" key="2">
    <source>
    </source>
</evidence>
<evidence type="ECO:0000303" key="3">
    <source>
    </source>
</evidence>
<evidence type="ECO:0000305" key="4"/>
<evidence type="ECO:0000305" key="5">
    <source>
    </source>
</evidence>
<feature type="chain" id="PRO_0000417579" description="Inclusion membrane protein D">
    <location>
        <begin position="1"/>
        <end position="146"/>
    </location>
</feature>
<feature type="transmembrane region" description="Helical" evidence="1">
    <location>
        <begin position="38"/>
        <end position="58"/>
    </location>
</feature>
<feature type="transmembrane region" description="Helical" evidence="1">
    <location>
        <begin position="68"/>
        <end position="88"/>
    </location>
</feature>
<comment type="function">
    <text evidence="5">Host inclusion membrane protein probably involved in early modification events of the chlamydial inclusion.</text>
</comment>
<comment type="subcellular location">
    <subcellularLocation>
        <location evidence="5">Secreted</location>
    </subcellularLocation>
    <subcellularLocation>
        <location evidence="2">Host vacuole</location>
        <location evidence="2">Host pathogen-containing vacuole</location>
        <location evidence="2">Host pathogen-containing vacuole membrane</location>
        <topology evidence="1">Multi-pass membrane protein</topology>
    </subcellularLocation>
    <text evidence="2 5">Secreted, probably by a type III secretion system (Probable). Localized in the inclusion membrane (PubMed:10447885). Inclusion membrane staining is punctate (PubMed:10447885).</text>
</comment>
<comment type="developmental stage">
    <text evidence="2">Present in reticulate bodies (RB) not detected in elementary bodies (EB) (at protein level).</text>
</comment>
<comment type="induction">
    <text evidence="2">Cotranscribed with incE, incF and incG within 2 hours after internalization.</text>
</comment>
<comment type="sequence caution" evidence="4">
    <conflict type="erroneous initiation">
        <sequence resource="EMBL-CDS" id="CAP03810"/>
    </conflict>
    <text>Extended N-terminus.</text>
</comment>
<sequence>MTKVYAHSIQQERVVDRIALLERCLDLSNSLPTAKRLAAVAVATILAIALLVVAGLLFSGVLCSPVSVVAASLFFGVGAFLLGGALVGGVLTTEAVTRERLHRSQTLMWNNLCCKTAEVEQKISTASANAKSNDKLENSVSKKGAS</sequence>
<protein>
    <recommendedName>
        <fullName evidence="3">Inclusion membrane protein D</fullName>
    </recommendedName>
</protein>
<proteinExistence type="evidence at protein level"/>
<gene>
    <name evidence="3" type="primary">incD</name>
    <name type="ordered locus">CTL0370</name>
</gene>
<name>INCD_CHLT2</name>
<accession>B0B9M3</accession>
<accession>O84117</accession>
<accession>Q9RPQ1</accession>
<reference key="1">
    <citation type="journal article" date="1999" name="Mol. Microbiol.">
        <title>Identification and characterization of a Chlamydia trachomatis early operon encoding four novel inclusion membrane proteins.</title>
        <authorList>
            <person name="Scidmore-Carlson M.A."/>
            <person name="Shaw E.I."/>
            <person name="Dooley C.A."/>
            <person name="Fischer E.R."/>
            <person name="Hackstadt T."/>
        </authorList>
    </citation>
    <scope>NUCLEOTIDE SEQUENCE [GENOMIC DNA]</scope>
    <scope>FUNCTION</scope>
    <scope>SUBCELLULAR LOCATION</scope>
    <scope>DEVELOPMENTAL STAGE</scope>
    <scope>INDUCTION</scope>
    <source>
        <strain>ATCC VR-902B / DSM 19102 / 434/Bu</strain>
    </source>
</reference>
<reference key="2">
    <citation type="journal article" date="2008" name="Genome Res.">
        <title>Chlamydia trachomatis: genome sequence analysis of lymphogranuloma venereum isolates.</title>
        <authorList>
            <person name="Thomson N.R."/>
            <person name="Holden M.T.G."/>
            <person name="Carder C."/>
            <person name="Lennard N."/>
            <person name="Lockey S.J."/>
            <person name="Marsh P."/>
            <person name="Skipp P."/>
            <person name="O'Connor C.D."/>
            <person name="Goodhead I."/>
            <person name="Norbertzcak H."/>
            <person name="Harris B."/>
            <person name="Ormond D."/>
            <person name="Rance R."/>
            <person name="Quail M.A."/>
            <person name="Parkhill J."/>
            <person name="Stephens R.S."/>
            <person name="Clarke I.N."/>
        </authorList>
    </citation>
    <scope>NUCLEOTIDE SEQUENCE [LARGE SCALE GENOMIC DNA]</scope>
    <source>
        <strain>ATCC VR-902B / DSM 19102 / 434/Bu</strain>
    </source>
</reference>
<organism>
    <name type="scientific">Chlamydia trachomatis serovar L2 (strain ATCC VR-902B / DSM 19102 / 434/Bu)</name>
    <dbReference type="NCBI Taxonomy" id="471472"/>
    <lineage>
        <taxon>Bacteria</taxon>
        <taxon>Pseudomonadati</taxon>
        <taxon>Chlamydiota</taxon>
        <taxon>Chlamydiia</taxon>
        <taxon>Chlamydiales</taxon>
        <taxon>Chlamydiaceae</taxon>
        <taxon>Chlamydia/Chlamydophila group</taxon>
        <taxon>Chlamydia</taxon>
    </lineage>
</organism>
<dbReference type="EMBL" id="AF151374">
    <property type="protein sequence ID" value="AAD43974.1"/>
    <property type="molecule type" value="Genomic_DNA"/>
</dbReference>
<dbReference type="EMBL" id="AM884176">
    <property type="protein sequence ID" value="CAP03810.1"/>
    <property type="status" value="ALT_INIT"/>
    <property type="molecule type" value="Genomic_DNA"/>
</dbReference>
<dbReference type="RefSeq" id="YP_001654454.1">
    <property type="nucleotide sequence ID" value="NC_010287.1"/>
</dbReference>
<dbReference type="KEGG" id="ctb:CTL0370"/>
<dbReference type="PATRIC" id="fig|471472.4.peg.401"/>
<dbReference type="HOGENOM" id="CLU_139635_0_0_0"/>
<dbReference type="Proteomes" id="UP001154402">
    <property type="component" value="Chromosome"/>
</dbReference>
<dbReference type="GO" id="GO:0005576">
    <property type="term" value="C:extracellular region"/>
    <property type="evidence" value="ECO:0007669"/>
    <property type="project" value="UniProtKB-SubCell"/>
</dbReference>
<dbReference type="GO" id="GO:0033644">
    <property type="term" value="C:host cell membrane"/>
    <property type="evidence" value="ECO:0007669"/>
    <property type="project" value="UniProtKB-KW"/>
</dbReference>
<dbReference type="GO" id="GO:0140221">
    <property type="term" value="C:pathogen-containing vacuole membrane"/>
    <property type="evidence" value="ECO:0000314"/>
    <property type="project" value="UniProtKB"/>
</dbReference>
<dbReference type="InterPro" id="IPR035117">
    <property type="entry name" value="IncD"/>
</dbReference>
<dbReference type="Pfam" id="PF17628">
    <property type="entry name" value="IncD"/>
    <property type="match status" value="1"/>
</dbReference>
<keyword id="KW-1043">Host membrane</keyword>
<keyword id="KW-0472">Membrane</keyword>
<keyword id="KW-0964">Secreted</keyword>
<keyword id="KW-0812">Transmembrane</keyword>
<keyword id="KW-1133">Transmembrane helix</keyword>
<keyword id="KW-0843">Virulence</keyword>